<name>SYE_GEOUR</name>
<gene>
    <name evidence="1" type="primary">gltX</name>
    <name type="ordered locus">Gura_2300</name>
</gene>
<evidence type="ECO:0000255" key="1">
    <source>
        <dbReference type="HAMAP-Rule" id="MF_00022"/>
    </source>
</evidence>
<dbReference type="EC" id="6.1.1.17" evidence="1"/>
<dbReference type="EMBL" id="CP000698">
    <property type="protein sequence ID" value="ABQ26479.1"/>
    <property type="molecule type" value="Genomic_DNA"/>
</dbReference>
<dbReference type="RefSeq" id="WP_011939173.1">
    <property type="nucleotide sequence ID" value="NC_009483.1"/>
</dbReference>
<dbReference type="SMR" id="A5G3W1"/>
<dbReference type="STRING" id="351605.Gura_2300"/>
<dbReference type="KEGG" id="gur:Gura_2300"/>
<dbReference type="HOGENOM" id="CLU_015768_6_3_7"/>
<dbReference type="OrthoDB" id="9807503at2"/>
<dbReference type="Proteomes" id="UP000006695">
    <property type="component" value="Chromosome"/>
</dbReference>
<dbReference type="GO" id="GO:0005829">
    <property type="term" value="C:cytosol"/>
    <property type="evidence" value="ECO:0007669"/>
    <property type="project" value="TreeGrafter"/>
</dbReference>
<dbReference type="GO" id="GO:0005524">
    <property type="term" value="F:ATP binding"/>
    <property type="evidence" value="ECO:0007669"/>
    <property type="project" value="UniProtKB-UniRule"/>
</dbReference>
<dbReference type="GO" id="GO:0004818">
    <property type="term" value="F:glutamate-tRNA ligase activity"/>
    <property type="evidence" value="ECO:0007669"/>
    <property type="project" value="UniProtKB-UniRule"/>
</dbReference>
<dbReference type="GO" id="GO:0000049">
    <property type="term" value="F:tRNA binding"/>
    <property type="evidence" value="ECO:0007669"/>
    <property type="project" value="InterPro"/>
</dbReference>
<dbReference type="GO" id="GO:0008270">
    <property type="term" value="F:zinc ion binding"/>
    <property type="evidence" value="ECO:0007669"/>
    <property type="project" value="UniProtKB-UniRule"/>
</dbReference>
<dbReference type="GO" id="GO:0006424">
    <property type="term" value="P:glutamyl-tRNA aminoacylation"/>
    <property type="evidence" value="ECO:0007669"/>
    <property type="project" value="UniProtKB-UniRule"/>
</dbReference>
<dbReference type="CDD" id="cd00808">
    <property type="entry name" value="GluRS_core"/>
    <property type="match status" value="1"/>
</dbReference>
<dbReference type="FunFam" id="3.40.50.620:FF:000007">
    <property type="entry name" value="Glutamate--tRNA ligase"/>
    <property type="match status" value="1"/>
</dbReference>
<dbReference type="Gene3D" id="1.10.10.350">
    <property type="match status" value="1"/>
</dbReference>
<dbReference type="Gene3D" id="3.40.50.620">
    <property type="entry name" value="HUPs"/>
    <property type="match status" value="1"/>
</dbReference>
<dbReference type="HAMAP" id="MF_00022">
    <property type="entry name" value="Glu_tRNA_synth_type1"/>
    <property type="match status" value="1"/>
</dbReference>
<dbReference type="InterPro" id="IPR045462">
    <property type="entry name" value="aa-tRNA-synth_I_cd-bd"/>
</dbReference>
<dbReference type="InterPro" id="IPR020751">
    <property type="entry name" value="aa-tRNA-synth_I_codon-bd_sub2"/>
</dbReference>
<dbReference type="InterPro" id="IPR001412">
    <property type="entry name" value="aa-tRNA-synth_I_CS"/>
</dbReference>
<dbReference type="InterPro" id="IPR008925">
    <property type="entry name" value="aa_tRNA-synth_I_cd-bd_sf"/>
</dbReference>
<dbReference type="InterPro" id="IPR004527">
    <property type="entry name" value="Glu-tRNA-ligase_bac/mito"/>
</dbReference>
<dbReference type="InterPro" id="IPR000924">
    <property type="entry name" value="Glu/Gln-tRNA-synth"/>
</dbReference>
<dbReference type="InterPro" id="IPR020058">
    <property type="entry name" value="Glu/Gln-tRNA-synth_Ib_cat-dom"/>
</dbReference>
<dbReference type="InterPro" id="IPR049940">
    <property type="entry name" value="GluQ/Sye"/>
</dbReference>
<dbReference type="InterPro" id="IPR033910">
    <property type="entry name" value="GluRS_core"/>
</dbReference>
<dbReference type="InterPro" id="IPR014729">
    <property type="entry name" value="Rossmann-like_a/b/a_fold"/>
</dbReference>
<dbReference type="NCBIfam" id="TIGR00464">
    <property type="entry name" value="gltX_bact"/>
    <property type="match status" value="1"/>
</dbReference>
<dbReference type="PANTHER" id="PTHR43311">
    <property type="entry name" value="GLUTAMATE--TRNA LIGASE"/>
    <property type="match status" value="1"/>
</dbReference>
<dbReference type="PANTHER" id="PTHR43311:SF2">
    <property type="entry name" value="GLUTAMATE--TRNA LIGASE, MITOCHONDRIAL-RELATED"/>
    <property type="match status" value="1"/>
</dbReference>
<dbReference type="Pfam" id="PF19269">
    <property type="entry name" value="Anticodon_2"/>
    <property type="match status" value="1"/>
</dbReference>
<dbReference type="Pfam" id="PF00749">
    <property type="entry name" value="tRNA-synt_1c"/>
    <property type="match status" value="1"/>
</dbReference>
<dbReference type="PRINTS" id="PR00987">
    <property type="entry name" value="TRNASYNTHGLU"/>
</dbReference>
<dbReference type="SUPFAM" id="SSF48163">
    <property type="entry name" value="An anticodon-binding domain of class I aminoacyl-tRNA synthetases"/>
    <property type="match status" value="1"/>
</dbReference>
<dbReference type="SUPFAM" id="SSF52374">
    <property type="entry name" value="Nucleotidylyl transferase"/>
    <property type="match status" value="1"/>
</dbReference>
<dbReference type="PROSITE" id="PS00178">
    <property type="entry name" value="AA_TRNA_LIGASE_I"/>
    <property type="match status" value="1"/>
</dbReference>
<proteinExistence type="inferred from homology"/>
<feature type="chain" id="PRO_1000074322" description="Glutamate--tRNA ligase">
    <location>
        <begin position="1"/>
        <end position="467"/>
    </location>
</feature>
<feature type="short sequence motif" description="'HIGH' region" evidence="1">
    <location>
        <begin position="10"/>
        <end position="20"/>
    </location>
</feature>
<feature type="short sequence motif" description="'KMSKS' region" evidence="1">
    <location>
        <begin position="237"/>
        <end position="241"/>
    </location>
</feature>
<feature type="binding site" evidence="1">
    <location>
        <position position="99"/>
    </location>
    <ligand>
        <name>Zn(2+)</name>
        <dbReference type="ChEBI" id="CHEBI:29105"/>
    </ligand>
</feature>
<feature type="binding site" evidence="1">
    <location>
        <position position="101"/>
    </location>
    <ligand>
        <name>Zn(2+)</name>
        <dbReference type="ChEBI" id="CHEBI:29105"/>
    </ligand>
</feature>
<feature type="binding site" evidence="1">
    <location>
        <position position="126"/>
    </location>
    <ligand>
        <name>Zn(2+)</name>
        <dbReference type="ChEBI" id="CHEBI:29105"/>
    </ligand>
</feature>
<feature type="binding site" evidence="1">
    <location>
        <position position="128"/>
    </location>
    <ligand>
        <name>Zn(2+)</name>
        <dbReference type="ChEBI" id="CHEBI:29105"/>
    </ligand>
</feature>
<feature type="binding site" evidence="1">
    <location>
        <position position="240"/>
    </location>
    <ligand>
        <name>ATP</name>
        <dbReference type="ChEBI" id="CHEBI:30616"/>
    </ligand>
</feature>
<protein>
    <recommendedName>
        <fullName evidence="1">Glutamate--tRNA ligase</fullName>
        <ecNumber evidence="1">6.1.1.17</ecNumber>
    </recommendedName>
    <alternativeName>
        <fullName evidence="1">Glutamyl-tRNA synthetase</fullName>
        <shortName evidence="1">GluRS</shortName>
    </alternativeName>
</protein>
<sequence>MTEVRLRFAPSPTGYLHVGGARTALFNWLLARKQKGTFILRIEDTDVARSTQESVDAILQGMEWLGLDWDEGPYYQSDRFPVYKEFVQKLLDSGKAYKCYCTPEELEAKREQALMDGRKPKYDGTCRELAGDVPGKPHVVRFRAPHEGVTAFDDLIKGRIAFNNDELDDLIIQRSDGTPTYNFVVVIDDATMGITTVIRGDDHVNNTPRQILLYEALGYPVPHFAHVPMILGADKARLSKRHGATGVMAYRDMGYLPEALVNYLVRLGWSFGDEEIFSKEDLIEKFSIEQVGRSAGVFNPDKLLWLNAHYIKTGDPSRLAGLLVPFLRERGVDPTGGPDLVAVVKTLQERSRTLLEMADGALFYFRRDFSYDEKAVEKFLTPEVSPLYELLIAKFASSADFTHQSIEQIFKEICEEKGLKLGQVAQPARIALCGGTVAPSIFEVMEVLGKEETNLRLEKALAFVRRG</sequence>
<accession>A5G3W1</accession>
<keyword id="KW-0030">Aminoacyl-tRNA synthetase</keyword>
<keyword id="KW-0067">ATP-binding</keyword>
<keyword id="KW-0963">Cytoplasm</keyword>
<keyword id="KW-0436">Ligase</keyword>
<keyword id="KW-0479">Metal-binding</keyword>
<keyword id="KW-0547">Nucleotide-binding</keyword>
<keyword id="KW-0648">Protein biosynthesis</keyword>
<keyword id="KW-1185">Reference proteome</keyword>
<keyword id="KW-0862">Zinc</keyword>
<comment type="function">
    <text evidence="1">Catalyzes the attachment of glutamate to tRNA(Glu) in a two-step reaction: glutamate is first activated by ATP to form Glu-AMP and then transferred to the acceptor end of tRNA(Glu).</text>
</comment>
<comment type="catalytic activity">
    <reaction evidence="1">
        <text>tRNA(Glu) + L-glutamate + ATP = L-glutamyl-tRNA(Glu) + AMP + diphosphate</text>
        <dbReference type="Rhea" id="RHEA:23540"/>
        <dbReference type="Rhea" id="RHEA-COMP:9663"/>
        <dbReference type="Rhea" id="RHEA-COMP:9680"/>
        <dbReference type="ChEBI" id="CHEBI:29985"/>
        <dbReference type="ChEBI" id="CHEBI:30616"/>
        <dbReference type="ChEBI" id="CHEBI:33019"/>
        <dbReference type="ChEBI" id="CHEBI:78442"/>
        <dbReference type="ChEBI" id="CHEBI:78520"/>
        <dbReference type="ChEBI" id="CHEBI:456215"/>
        <dbReference type="EC" id="6.1.1.17"/>
    </reaction>
</comment>
<comment type="cofactor">
    <cofactor evidence="1">
        <name>Zn(2+)</name>
        <dbReference type="ChEBI" id="CHEBI:29105"/>
    </cofactor>
    <text evidence="1">Binds 1 zinc ion per subunit.</text>
</comment>
<comment type="subunit">
    <text evidence="1">Monomer.</text>
</comment>
<comment type="subcellular location">
    <subcellularLocation>
        <location evidence="1">Cytoplasm</location>
    </subcellularLocation>
</comment>
<comment type="similarity">
    <text evidence="1">Belongs to the class-I aminoacyl-tRNA synthetase family. Glutamate--tRNA ligase type 1 subfamily.</text>
</comment>
<organism>
    <name type="scientific">Geotalea uraniireducens (strain Rf4)</name>
    <name type="common">Geobacter uraniireducens</name>
    <dbReference type="NCBI Taxonomy" id="351605"/>
    <lineage>
        <taxon>Bacteria</taxon>
        <taxon>Pseudomonadati</taxon>
        <taxon>Thermodesulfobacteriota</taxon>
        <taxon>Desulfuromonadia</taxon>
        <taxon>Geobacterales</taxon>
        <taxon>Geobacteraceae</taxon>
        <taxon>Geotalea</taxon>
    </lineage>
</organism>
<reference key="1">
    <citation type="submission" date="2007-05" db="EMBL/GenBank/DDBJ databases">
        <title>Complete sequence of Geobacter uraniireducens Rf4.</title>
        <authorList>
            <consortium name="US DOE Joint Genome Institute"/>
            <person name="Copeland A."/>
            <person name="Lucas S."/>
            <person name="Lapidus A."/>
            <person name="Barry K."/>
            <person name="Detter J.C."/>
            <person name="Glavina del Rio T."/>
            <person name="Hammon N."/>
            <person name="Israni S."/>
            <person name="Dalin E."/>
            <person name="Tice H."/>
            <person name="Pitluck S."/>
            <person name="Chertkov O."/>
            <person name="Brettin T."/>
            <person name="Bruce D."/>
            <person name="Han C."/>
            <person name="Schmutz J."/>
            <person name="Larimer F."/>
            <person name="Land M."/>
            <person name="Hauser L."/>
            <person name="Kyrpides N."/>
            <person name="Mikhailova N."/>
            <person name="Shelobolina E."/>
            <person name="Aklujkar M."/>
            <person name="Lovley D."/>
            <person name="Richardson P."/>
        </authorList>
    </citation>
    <scope>NUCLEOTIDE SEQUENCE [LARGE SCALE GENOMIC DNA]</scope>
    <source>
        <strain>ATCC BAA-1134 / JCM 13001 / Rf4</strain>
    </source>
</reference>